<dbReference type="EMBL" id="CP000800">
    <property type="protein sequence ID" value="ABV20712.1"/>
    <property type="molecule type" value="Genomic_DNA"/>
</dbReference>
<dbReference type="RefSeq" id="WP_001295647.1">
    <property type="nucleotide sequence ID" value="NC_009801.1"/>
</dbReference>
<dbReference type="SMR" id="A7ZN19"/>
<dbReference type="GeneID" id="93776197"/>
<dbReference type="KEGG" id="ecw:EcE24377A_2125"/>
<dbReference type="HOGENOM" id="CLU_144160_0_0_6"/>
<dbReference type="Proteomes" id="UP000001122">
    <property type="component" value="Chromosome"/>
</dbReference>
<dbReference type="GO" id="GO:0005737">
    <property type="term" value="C:cytoplasm"/>
    <property type="evidence" value="ECO:0007669"/>
    <property type="project" value="UniProtKB-SubCell"/>
</dbReference>
<dbReference type="GO" id="GO:0003677">
    <property type="term" value="F:DNA binding"/>
    <property type="evidence" value="ECO:0007669"/>
    <property type="project" value="UniProtKB-UniRule"/>
</dbReference>
<dbReference type="GO" id="GO:0044780">
    <property type="term" value="P:bacterial-type flagellum assembly"/>
    <property type="evidence" value="ECO:0007669"/>
    <property type="project" value="InterPro"/>
</dbReference>
<dbReference type="GO" id="GO:0045893">
    <property type="term" value="P:positive regulation of DNA-templated transcription"/>
    <property type="evidence" value="ECO:0007669"/>
    <property type="project" value="InterPro"/>
</dbReference>
<dbReference type="GO" id="GO:1902208">
    <property type="term" value="P:regulation of bacterial-type flagellum assembly"/>
    <property type="evidence" value="ECO:0007669"/>
    <property type="project" value="UniProtKB-UniRule"/>
</dbReference>
<dbReference type="FunFam" id="1.10.4000.10:FF:000001">
    <property type="entry name" value="Flagellar transcriptional regulator FlhD"/>
    <property type="match status" value="1"/>
</dbReference>
<dbReference type="Gene3D" id="1.10.4000.10">
    <property type="entry name" value="Flagellar transcriptional activator FlhD"/>
    <property type="match status" value="1"/>
</dbReference>
<dbReference type="HAMAP" id="MF_00725">
    <property type="entry name" value="FlhD"/>
    <property type="match status" value="1"/>
</dbReference>
<dbReference type="InterPro" id="IPR023559">
    <property type="entry name" value="Flagellar_FlhD"/>
</dbReference>
<dbReference type="InterPro" id="IPR036194">
    <property type="entry name" value="FlhD_sf"/>
</dbReference>
<dbReference type="NCBIfam" id="NF002783">
    <property type="entry name" value="PRK02909.1-1"/>
    <property type="match status" value="1"/>
</dbReference>
<dbReference type="Pfam" id="PF05247">
    <property type="entry name" value="FlhD"/>
    <property type="match status" value="1"/>
</dbReference>
<dbReference type="SUPFAM" id="SSF63592">
    <property type="entry name" value="Flagellar transcriptional activator FlhD"/>
    <property type="match status" value="1"/>
</dbReference>
<gene>
    <name evidence="1" type="primary">flhD</name>
    <name type="ordered locus">EcE24377A_2125</name>
</gene>
<reference key="1">
    <citation type="journal article" date="2008" name="J. Bacteriol.">
        <title>The pangenome structure of Escherichia coli: comparative genomic analysis of E. coli commensal and pathogenic isolates.</title>
        <authorList>
            <person name="Rasko D.A."/>
            <person name="Rosovitz M.J."/>
            <person name="Myers G.S.A."/>
            <person name="Mongodin E.F."/>
            <person name="Fricke W.F."/>
            <person name="Gajer P."/>
            <person name="Crabtree J."/>
            <person name="Sebaihia M."/>
            <person name="Thomson N.R."/>
            <person name="Chaudhuri R."/>
            <person name="Henderson I.R."/>
            <person name="Sperandio V."/>
            <person name="Ravel J."/>
        </authorList>
    </citation>
    <scope>NUCLEOTIDE SEQUENCE [LARGE SCALE GENOMIC DNA]</scope>
    <source>
        <strain>E24377A / ETEC</strain>
    </source>
</reference>
<feature type="chain" id="PRO_1000062097" description="Flagellar transcriptional regulator FlhD">
    <location>
        <begin position="1"/>
        <end position="116"/>
    </location>
</feature>
<feature type="disulfide bond" description="Interchain" evidence="1">
    <location>
        <position position="65"/>
    </location>
</feature>
<evidence type="ECO:0000255" key="1">
    <source>
        <dbReference type="HAMAP-Rule" id="MF_00725"/>
    </source>
</evidence>
<accession>A7ZN19</accession>
<protein>
    <recommendedName>
        <fullName evidence="1">Flagellar transcriptional regulator FlhD</fullName>
    </recommendedName>
</protein>
<organism>
    <name type="scientific">Escherichia coli O139:H28 (strain E24377A / ETEC)</name>
    <dbReference type="NCBI Taxonomy" id="331111"/>
    <lineage>
        <taxon>Bacteria</taxon>
        <taxon>Pseudomonadati</taxon>
        <taxon>Pseudomonadota</taxon>
        <taxon>Gammaproteobacteria</taxon>
        <taxon>Enterobacterales</taxon>
        <taxon>Enterobacteriaceae</taxon>
        <taxon>Escherichia</taxon>
    </lineage>
</organism>
<name>FLHD_ECO24</name>
<sequence length="116" mass="13316">MHTSELLKHIYDINLSYLLLAQRLIVQDKASAMFRLGINEEMATTLAALTLPQMVKLAETNQLVCHFRFDSHQTITQLTQDSRVDDLQQIHTGIMLSTRLLNDVNQPEEALRKKRA</sequence>
<proteinExistence type="inferred from homology"/>
<keyword id="KW-0010">Activator</keyword>
<keyword id="KW-1005">Bacterial flagellum biogenesis</keyword>
<keyword id="KW-0963">Cytoplasm</keyword>
<keyword id="KW-1015">Disulfide bond</keyword>
<keyword id="KW-0238">DNA-binding</keyword>
<keyword id="KW-1185">Reference proteome</keyword>
<keyword id="KW-0804">Transcription</keyword>
<keyword id="KW-0805">Transcription regulation</keyword>
<comment type="function">
    <text evidence="1">Functions in complex with FlhC as a master transcriptional regulator that regulates transcription of several flagellar and non-flagellar operons by binding to their promoter region. Activates expression of class 2 flagellar genes, including fliA, which is a flagellum-specific sigma factor that turns on the class 3 genes. Also regulates genes whose products function in a variety of physiological pathways.</text>
</comment>
<comment type="subunit">
    <text evidence="1">Homodimer; disulfide-linked. Forms a heterohexamer composed of two FlhC and four FlhD subunits. Each FlhC binds a FlhD dimer, forming a heterotrimer, and a hexamer assembles by dimerization of two heterotrimers.</text>
</comment>
<comment type="subcellular location">
    <subcellularLocation>
        <location evidence="1">Cytoplasm</location>
    </subcellularLocation>
</comment>
<comment type="domain">
    <text evidence="1">The C-terminal region contains a putative helix-turn-helix (HTH) motif, suggesting that this region may bind DNA.</text>
</comment>
<comment type="similarity">
    <text evidence="1">Belongs to the FlhD family.</text>
</comment>